<keyword id="KW-0963">Cytoplasm</keyword>
<keyword id="KW-0479">Metal-binding</keyword>
<keyword id="KW-0539">Nucleus</keyword>
<keyword id="KW-0597">Phosphoprotein</keyword>
<keyword id="KW-1185">Reference proteome</keyword>
<keyword id="KW-0677">Repeat</keyword>
<keyword id="KW-0862">Zinc</keyword>
<keyword id="KW-0863">Zinc-finger</keyword>
<protein>
    <recommendedName>
        <fullName>Muscleblind-like protein 1</fullName>
    </recommendedName>
</protein>
<accession>A0A8I6B1J2</accession>
<sequence length="387" mass="41746">MAVSVTPIRDTKWLTLEVCREFQRGTCSRPDTECKFAHPSKSCQVENGRVIACFDSLKGRCSRENCKYLHPPPHLKTQLEINGRNNLIQQKNMAMLAQQMQLANAMMPGAPLQPVPMFSVAPSLATNASAAFNPYLGPVSPSLVPAEILPTAPMLVTGNPGVPVPAAAAAAAQKLMRTDRLEVCREYQRGNCNRGENDCRFAHPADSTMIDTNDNTVTVCMDYIKGRCSREKCKYFHPPAHLQAKIKAAQYQVNQAAAAQAAATAAAMTQSAVKSLKRPLEATFDLGIPQAVLPPLPKRPALEKTNGATAVFNTGIFQYQQALANMQLQQHTAFLPPVPMVHGATPATVSAATTSATSVPFAATATANQIPIISAEHLTSHKYVTQM</sequence>
<gene>
    <name evidence="6" type="primary">Mbnl1</name>
</gene>
<name>MBNL1_RAT</name>
<comment type="function">
    <text evidence="1 3 4">Mediates pre-mRNA alternative splicing regulation. Acts either as activator or repressor of splicing on specific pre-mRNA targets. Inhibits cardiac troponin-T (TNNT2) pre-mRNA exon inclusion but induces insulin receptor (IR) pre-mRNA exon inclusion in muscle. Antagonizes the alternative splicing activity pattern of CELF proteins. Regulates the TNNT2 exon 5 skipping through competition with U2AF2. Inhibits the formation of the spliceosome A complex on intron 4 of TNNT2 pre-mRNA (By similarity). Binds to the stem-loop structure within the polypyrimidine tract of TNNT2 intron 4 during spliceosome assembly. Binds to the 5'-YGCU(U/G)Y-3'consensus sequence. Binds to the IR RNA. Binds to expanded CUG repeat RNA, which folds into a hairpin structure containing GC base pairs and bulged, unpaired U residues (By similarity). Together with RNA binding proteins RBPMS and RBFOX2, activates vascular smooth muscle cells alternative splicing events (PubMed:37548402). Regulates NCOR2 alternative splicing (PubMed:31283468).</text>
</comment>
<comment type="subunit">
    <text evidence="1">Interacts with DDX1 and YBX1. Interacts with HNRNPH1; the interaction in RNA-independent (By similarity). Interacts with RBPMS; the interaction allows cooperative assembly of RNA-bound stable cell-specific alternative splicing regulatory complexes (By similarity).</text>
</comment>
<comment type="subcellular location">
    <subcellularLocation>
        <location evidence="1">Nucleus</location>
    </subcellularLocation>
    <subcellularLocation>
        <location evidence="1">Cytoplasm</location>
    </subcellularLocation>
    <subcellularLocation>
        <location evidence="1">Cytoplasmic granule</location>
    </subcellularLocation>
</comment>
<comment type="similarity">
    <text evidence="5">Belongs to the muscleblind family.</text>
</comment>
<proteinExistence type="inferred from homology"/>
<dbReference type="EMBL" id="AABR07010763">
    <property type="status" value="NOT_ANNOTATED_CDS"/>
    <property type="molecule type" value="Genomic_DNA"/>
</dbReference>
<dbReference type="RefSeq" id="NP_001178495.1">
    <property type="nucleotide sequence ID" value="NM_001191566.2"/>
</dbReference>
<dbReference type="RefSeq" id="XP_017446156.1">
    <property type="nucleotide sequence ID" value="XM_017590667.1"/>
</dbReference>
<dbReference type="RefSeq" id="XP_063137458.1">
    <property type="nucleotide sequence ID" value="XM_063281388.1"/>
</dbReference>
<dbReference type="SMR" id="A0A8I6B1J2"/>
<dbReference type="Ensembl" id="ENSRNOT00000097984.1">
    <property type="protein sequence ID" value="ENSRNOP00000094816.1"/>
    <property type="gene ID" value="ENSRNOG00000014076.8"/>
</dbReference>
<dbReference type="GeneID" id="282635"/>
<dbReference type="KEGG" id="rno:282635"/>
<dbReference type="AGR" id="RGD:628668"/>
<dbReference type="CTD" id="4154"/>
<dbReference type="RGD" id="628668">
    <property type="gene designation" value="Mbnl1"/>
</dbReference>
<dbReference type="GeneTree" id="ENSGT00950000182897"/>
<dbReference type="Proteomes" id="UP000002494">
    <property type="component" value="Chromosome 2"/>
</dbReference>
<dbReference type="GO" id="GO:0005737">
    <property type="term" value="C:cytoplasm"/>
    <property type="evidence" value="ECO:0000266"/>
    <property type="project" value="RGD"/>
</dbReference>
<dbReference type="GO" id="GO:0010494">
    <property type="term" value="C:cytoplasmic stress granule"/>
    <property type="evidence" value="ECO:0000266"/>
    <property type="project" value="RGD"/>
</dbReference>
<dbReference type="GO" id="GO:0005654">
    <property type="term" value="C:nucleoplasm"/>
    <property type="evidence" value="ECO:0000318"/>
    <property type="project" value="GO_Central"/>
</dbReference>
<dbReference type="GO" id="GO:0005634">
    <property type="term" value="C:nucleus"/>
    <property type="evidence" value="ECO:0000266"/>
    <property type="project" value="RGD"/>
</dbReference>
<dbReference type="GO" id="GO:0003725">
    <property type="term" value="F:double-stranded RNA binding"/>
    <property type="evidence" value="ECO:0000266"/>
    <property type="project" value="RGD"/>
</dbReference>
<dbReference type="GO" id="GO:0001069">
    <property type="term" value="F:regulatory region RNA binding"/>
    <property type="evidence" value="ECO:0000314"/>
    <property type="project" value="RGD"/>
</dbReference>
<dbReference type="GO" id="GO:0003723">
    <property type="term" value="F:RNA binding"/>
    <property type="evidence" value="ECO:0000266"/>
    <property type="project" value="RGD"/>
</dbReference>
<dbReference type="GO" id="GO:0008270">
    <property type="term" value="F:zinc ion binding"/>
    <property type="evidence" value="ECO:0007669"/>
    <property type="project" value="UniProtKB-KW"/>
</dbReference>
<dbReference type="GO" id="GO:0000380">
    <property type="term" value="P:alternative mRNA splicing, via spliceosome"/>
    <property type="evidence" value="ECO:0000266"/>
    <property type="project" value="RGD"/>
</dbReference>
<dbReference type="GO" id="GO:0030326">
    <property type="term" value="P:embryonic limb morphogenesis"/>
    <property type="evidence" value="ECO:0000266"/>
    <property type="project" value="RGD"/>
</dbReference>
<dbReference type="GO" id="GO:0001701">
    <property type="term" value="P:in utero embryonic development"/>
    <property type="evidence" value="ECO:0000266"/>
    <property type="project" value="RGD"/>
</dbReference>
<dbReference type="GO" id="GO:0006376">
    <property type="term" value="P:mRNA splice site recognition"/>
    <property type="evidence" value="ECO:0000266"/>
    <property type="project" value="RGD"/>
</dbReference>
<dbReference type="GO" id="GO:0045445">
    <property type="term" value="P:myoblast differentiation"/>
    <property type="evidence" value="ECO:0000266"/>
    <property type="project" value="RGD"/>
</dbReference>
<dbReference type="GO" id="GO:0007399">
    <property type="term" value="P:nervous system development"/>
    <property type="evidence" value="ECO:0000266"/>
    <property type="project" value="RGD"/>
</dbReference>
<dbReference type="GO" id="GO:0000381">
    <property type="term" value="P:regulation of alternative mRNA splicing, via spliceosome"/>
    <property type="evidence" value="ECO:0000315"/>
    <property type="project" value="UniProtKB"/>
</dbReference>
<dbReference type="GO" id="GO:0043484">
    <property type="term" value="P:regulation of RNA splicing"/>
    <property type="evidence" value="ECO:0000266"/>
    <property type="project" value="RGD"/>
</dbReference>
<dbReference type="GO" id="GO:0008380">
    <property type="term" value="P:RNA splicing"/>
    <property type="evidence" value="ECO:0000266"/>
    <property type="project" value="RGD"/>
</dbReference>
<dbReference type="GO" id="GO:0007519">
    <property type="term" value="P:skeletal muscle tissue development"/>
    <property type="evidence" value="ECO:0000266"/>
    <property type="project" value="RGD"/>
</dbReference>
<dbReference type="FunFam" id="3.30.1370.210:FF:000004">
    <property type="entry name" value="Muscleblind like splicing regulator 1"/>
    <property type="match status" value="1"/>
</dbReference>
<dbReference type="FunFam" id="3.30.1370.210:FF:000002">
    <property type="entry name" value="Muscleblind-like 1 isoform 2"/>
    <property type="match status" value="1"/>
</dbReference>
<dbReference type="Gene3D" id="3.30.1370.210">
    <property type="match status" value="2"/>
</dbReference>
<dbReference type="InterPro" id="IPR054429">
    <property type="entry name" value="Znf-CCCH_Muscleblind-like"/>
</dbReference>
<dbReference type="InterPro" id="IPR000571">
    <property type="entry name" value="Znf_CCCH"/>
</dbReference>
<dbReference type="PANTHER" id="PTHR12675">
    <property type="entry name" value="MUSCLEBLIND-LIKE PROTEIN"/>
    <property type="match status" value="1"/>
</dbReference>
<dbReference type="PANTHER" id="PTHR12675:SF7">
    <property type="entry name" value="MUSCLEBLIND-LIKE PROTEIN 1"/>
    <property type="match status" value="1"/>
</dbReference>
<dbReference type="Pfam" id="PF00642">
    <property type="entry name" value="zf-CCCH"/>
    <property type="match status" value="1"/>
</dbReference>
<dbReference type="Pfam" id="PF22628">
    <property type="entry name" value="zf-CCCH_10"/>
    <property type="match status" value="2"/>
</dbReference>
<dbReference type="Pfam" id="PF14608">
    <property type="entry name" value="zf-CCCH_2"/>
    <property type="match status" value="1"/>
</dbReference>
<dbReference type="SMART" id="SM00356">
    <property type="entry name" value="ZnF_C3H1"/>
    <property type="match status" value="4"/>
</dbReference>
<dbReference type="PROSITE" id="PS50103">
    <property type="entry name" value="ZF_C3H1"/>
    <property type="match status" value="4"/>
</dbReference>
<feature type="chain" id="PRO_0000459653" description="Muscleblind-like protein 1">
    <location>
        <begin position="1"/>
        <end position="387"/>
    </location>
</feature>
<feature type="zinc finger region" description="C3H1-type 1" evidence="2">
    <location>
        <begin position="13"/>
        <end position="41"/>
    </location>
</feature>
<feature type="zinc finger region" description="C3H1-type 2" evidence="2">
    <location>
        <begin position="47"/>
        <end position="73"/>
    </location>
</feature>
<feature type="zinc finger region" description="C3H1-type 3" evidence="2">
    <location>
        <begin position="178"/>
        <end position="206"/>
    </location>
</feature>
<feature type="zinc finger region" description="C3H1-type 4" evidence="2">
    <location>
        <begin position="214"/>
        <end position="240"/>
    </location>
</feature>
<feature type="modified residue" description="Phosphothreonine" evidence="1">
    <location>
        <position position="6"/>
    </location>
</feature>
<reference key="1">
    <citation type="journal article" date="2004" name="Nature">
        <title>Genome sequence of the Brown Norway rat yields insights into mammalian evolution.</title>
        <authorList>
            <person name="Gibbs R.A."/>
            <person name="Weinstock G.M."/>
            <person name="Metzker M.L."/>
            <person name="Muzny D.M."/>
            <person name="Sodergren E.J."/>
            <person name="Scherer S."/>
            <person name="Scott G."/>
            <person name="Steffen D."/>
            <person name="Worley K.C."/>
            <person name="Burch P.E."/>
            <person name="Okwuonu G."/>
            <person name="Hines S."/>
            <person name="Lewis L."/>
            <person name="Deramo C."/>
            <person name="Delgado O."/>
            <person name="Dugan-Rocha S."/>
            <person name="Miner G."/>
            <person name="Morgan M."/>
            <person name="Hawes A."/>
            <person name="Gill R."/>
            <person name="Holt R.A."/>
            <person name="Adams M.D."/>
            <person name="Amanatides P.G."/>
            <person name="Baden-Tillson H."/>
            <person name="Barnstead M."/>
            <person name="Chin S."/>
            <person name="Evans C.A."/>
            <person name="Ferriera S."/>
            <person name="Fosler C."/>
            <person name="Glodek A."/>
            <person name="Gu Z."/>
            <person name="Jennings D."/>
            <person name="Kraft C.L."/>
            <person name="Nguyen T."/>
            <person name="Pfannkoch C.M."/>
            <person name="Sitter C."/>
            <person name="Sutton G.G."/>
            <person name="Venter J.C."/>
            <person name="Woodage T."/>
            <person name="Smith D."/>
            <person name="Lee H.-M."/>
            <person name="Gustafson E."/>
            <person name="Cahill P."/>
            <person name="Kana A."/>
            <person name="Doucette-Stamm L."/>
            <person name="Weinstock K."/>
            <person name="Fechtel K."/>
            <person name="Weiss R.B."/>
            <person name="Dunn D.M."/>
            <person name="Green E.D."/>
            <person name="Blakesley R.W."/>
            <person name="Bouffard G.G."/>
            <person name="De Jong P.J."/>
            <person name="Osoegawa K."/>
            <person name="Zhu B."/>
            <person name="Marra M."/>
            <person name="Schein J."/>
            <person name="Bosdet I."/>
            <person name="Fjell C."/>
            <person name="Jones S."/>
            <person name="Krzywinski M."/>
            <person name="Mathewson C."/>
            <person name="Siddiqui A."/>
            <person name="Wye N."/>
            <person name="McPherson J."/>
            <person name="Zhao S."/>
            <person name="Fraser C.M."/>
            <person name="Shetty J."/>
            <person name="Shatsman S."/>
            <person name="Geer K."/>
            <person name="Chen Y."/>
            <person name="Abramzon S."/>
            <person name="Nierman W.C."/>
            <person name="Havlak P.H."/>
            <person name="Chen R."/>
            <person name="Durbin K.J."/>
            <person name="Egan A."/>
            <person name="Ren Y."/>
            <person name="Song X.-Z."/>
            <person name="Li B."/>
            <person name="Liu Y."/>
            <person name="Qin X."/>
            <person name="Cawley S."/>
            <person name="Cooney A.J."/>
            <person name="D'Souza L.M."/>
            <person name="Martin K."/>
            <person name="Wu J.Q."/>
            <person name="Gonzalez-Garay M.L."/>
            <person name="Jackson A.R."/>
            <person name="Kalafus K.J."/>
            <person name="McLeod M.P."/>
            <person name="Milosavljevic A."/>
            <person name="Virk D."/>
            <person name="Volkov A."/>
            <person name="Wheeler D.A."/>
            <person name="Zhang Z."/>
            <person name="Bailey J.A."/>
            <person name="Eichler E.E."/>
            <person name="Tuzun E."/>
            <person name="Birney E."/>
            <person name="Mongin E."/>
            <person name="Ureta-Vidal A."/>
            <person name="Woodwark C."/>
            <person name="Zdobnov E."/>
            <person name="Bork P."/>
            <person name="Suyama M."/>
            <person name="Torrents D."/>
            <person name="Alexandersson M."/>
            <person name="Trask B.J."/>
            <person name="Young J.M."/>
            <person name="Huang H."/>
            <person name="Wang H."/>
            <person name="Xing H."/>
            <person name="Daniels S."/>
            <person name="Gietzen D."/>
            <person name="Schmidt J."/>
            <person name="Stevens K."/>
            <person name="Vitt U."/>
            <person name="Wingrove J."/>
            <person name="Camara F."/>
            <person name="Mar Alba M."/>
            <person name="Abril J.F."/>
            <person name="Guigo R."/>
            <person name="Smit A."/>
            <person name="Dubchak I."/>
            <person name="Rubin E.M."/>
            <person name="Couronne O."/>
            <person name="Poliakov A."/>
            <person name="Huebner N."/>
            <person name="Ganten D."/>
            <person name="Goesele C."/>
            <person name="Hummel O."/>
            <person name="Kreitler T."/>
            <person name="Lee Y.-A."/>
            <person name="Monti J."/>
            <person name="Schulz H."/>
            <person name="Zimdahl H."/>
            <person name="Himmelbauer H."/>
            <person name="Lehrach H."/>
            <person name="Jacob H.J."/>
            <person name="Bromberg S."/>
            <person name="Gullings-Handley J."/>
            <person name="Jensen-Seaman M.I."/>
            <person name="Kwitek A.E."/>
            <person name="Lazar J."/>
            <person name="Pasko D."/>
            <person name="Tonellato P.J."/>
            <person name="Twigger S."/>
            <person name="Ponting C.P."/>
            <person name="Duarte J.M."/>
            <person name="Rice S."/>
            <person name="Goodstadt L."/>
            <person name="Beatson S.A."/>
            <person name="Emes R.D."/>
            <person name="Winter E.E."/>
            <person name="Webber C."/>
            <person name="Brandt P."/>
            <person name="Nyakatura G."/>
            <person name="Adetobi M."/>
            <person name="Chiaromonte F."/>
            <person name="Elnitski L."/>
            <person name="Eswara P."/>
            <person name="Hardison R.C."/>
            <person name="Hou M."/>
            <person name="Kolbe D."/>
            <person name="Makova K."/>
            <person name="Miller W."/>
            <person name="Nekrutenko A."/>
            <person name="Riemer C."/>
            <person name="Schwartz S."/>
            <person name="Taylor J."/>
            <person name="Yang S."/>
            <person name="Zhang Y."/>
            <person name="Lindpaintner K."/>
            <person name="Andrews T.D."/>
            <person name="Caccamo M."/>
            <person name="Clamp M."/>
            <person name="Clarke L."/>
            <person name="Curwen V."/>
            <person name="Durbin R.M."/>
            <person name="Eyras E."/>
            <person name="Searle S.M."/>
            <person name="Cooper G.M."/>
            <person name="Batzoglou S."/>
            <person name="Brudno M."/>
            <person name="Sidow A."/>
            <person name="Stone E.A."/>
            <person name="Payseur B.A."/>
            <person name="Bourque G."/>
            <person name="Lopez-Otin C."/>
            <person name="Puente X.S."/>
            <person name="Chakrabarti K."/>
            <person name="Chatterji S."/>
            <person name="Dewey C."/>
            <person name="Pachter L."/>
            <person name="Bray N."/>
            <person name="Yap V.B."/>
            <person name="Caspi A."/>
            <person name="Tesler G."/>
            <person name="Pevzner P.A."/>
            <person name="Haussler D."/>
            <person name="Roskin K.M."/>
            <person name="Baertsch R."/>
            <person name="Clawson H."/>
            <person name="Furey T.S."/>
            <person name="Hinrichs A.S."/>
            <person name="Karolchik D."/>
            <person name="Kent W.J."/>
            <person name="Rosenbloom K.R."/>
            <person name="Trumbower H."/>
            <person name="Weirauch M."/>
            <person name="Cooper D.N."/>
            <person name="Stenson P.D."/>
            <person name="Ma B."/>
            <person name="Brent M."/>
            <person name="Arumugam M."/>
            <person name="Shteynberg D."/>
            <person name="Copley R.R."/>
            <person name="Taylor M.S."/>
            <person name="Riethman H."/>
            <person name="Mudunuri U."/>
            <person name="Peterson J."/>
            <person name="Guyer M."/>
            <person name="Felsenfeld A."/>
            <person name="Old S."/>
            <person name="Mockrin S."/>
            <person name="Collins F.S."/>
        </authorList>
    </citation>
    <scope>NUCLEOTIDE SEQUENCE [LARGE SCALE GENOMIC DNA]</scope>
    <source>
        <strain>Brown Norway</strain>
    </source>
</reference>
<reference key="2">
    <citation type="journal article" date="2019" name="Elife">
        <title>Identification of RBPMS as a mammalian smooth muscle master splicing regulator via proximity of its gene with super-enhancers.</title>
        <authorList>
            <person name="Nakagaki-Silva E.E."/>
            <person name="Gooding C."/>
            <person name="Llorian M."/>
            <person name="Jacob A.G."/>
            <person name="Richards F."/>
            <person name="Buckroyd A."/>
            <person name="Sinha S."/>
            <person name="Smith C.W.J."/>
        </authorList>
    </citation>
    <scope>FUNCTION</scope>
</reference>
<reference key="3">
    <citation type="journal article" date="2023" name="Nucleic Acids Res.">
        <title>Cell-type specific regulator RBPMS switches alternative splicing via higher-order oligomerization and heterotypic interactions with other splicing regulators.</title>
        <authorList>
            <person name="Yang Y."/>
            <person name="Lee G.C."/>
            <person name="Nakagaki-Silva E."/>
            <person name="Huang Y."/>
            <person name="Peacey M."/>
            <person name="Partridge R."/>
            <person name="Gooding C."/>
            <person name="Smith C.W.J."/>
        </authorList>
    </citation>
    <scope>FUNCTION</scope>
</reference>
<organism>
    <name type="scientific">Rattus norvegicus</name>
    <name type="common">Rat</name>
    <dbReference type="NCBI Taxonomy" id="10116"/>
    <lineage>
        <taxon>Eukaryota</taxon>
        <taxon>Metazoa</taxon>
        <taxon>Chordata</taxon>
        <taxon>Craniata</taxon>
        <taxon>Vertebrata</taxon>
        <taxon>Euteleostomi</taxon>
        <taxon>Mammalia</taxon>
        <taxon>Eutheria</taxon>
        <taxon>Euarchontoglires</taxon>
        <taxon>Glires</taxon>
        <taxon>Rodentia</taxon>
        <taxon>Myomorpha</taxon>
        <taxon>Muroidea</taxon>
        <taxon>Muridae</taxon>
        <taxon>Murinae</taxon>
        <taxon>Rattus</taxon>
    </lineage>
</organism>
<evidence type="ECO:0000250" key="1">
    <source>
        <dbReference type="UniProtKB" id="Q9NR56"/>
    </source>
</evidence>
<evidence type="ECO:0000255" key="2">
    <source>
        <dbReference type="PROSITE-ProRule" id="PRU00723"/>
    </source>
</evidence>
<evidence type="ECO:0000269" key="3">
    <source>
    </source>
</evidence>
<evidence type="ECO:0000269" key="4">
    <source>
    </source>
</evidence>
<evidence type="ECO:0000305" key="5"/>
<evidence type="ECO:0000312" key="6">
    <source>
        <dbReference type="RGD" id="628668"/>
    </source>
</evidence>